<gene>
    <name evidence="1" type="primary">hslV</name>
    <name type="ordered locus">BCAH187_A3877</name>
</gene>
<protein>
    <recommendedName>
        <fullName evidence="1">ATP-dependent protease subunit HslV</fullName>
        <ecNumber evidence="1">3.4.25.2</ecNumber>
    </recommendedName>
</protein>
<keyword id="KW-0021">Allosteric enzyme</keyword>
<keyword id="KW-0963">Cytoplasm</keyword>
<keyword id="KW-0378">Hydrolase</keyword>
<keyword id="KW-0479">Metal-binding</keyword>
<keyword id="KW-0645">Protease</keyword>
<keyword id="KW-0915">Sodium</keyword>
<keyword id="KW-0888">Threonine protease</keyword>
<name>HSLV_BACC7</name>
<evidence type="ECO:0000255" key="1">
    <source>
        <dbReference type="HAMAP-Rule" id="MF_00248"/>
    </source>
</evidence>
<organism>
    <name type="scientific">Bacillus cereus (strain AH187)</name>
    <dbReference type="NCBI Taxonomy" id="405534"/>
    <lineage>
        <taxon>Bacteria</taxon>
        <taxon>Bacillati</taxon>
        <taxon>Bacillota</taxon>
        <taxon>Bacilli</taxon>
        <taxon>Bacillales</taxon>
        <taxon>Bacillaceae</taxon>
        <taxon>Bacillus</taxon>
        <taxon>Bacillus cereus group</taxon>
    </lineage>
</organism>
<dbReference type="EC" id="3.4.25.2" evidence="1"/>
<dbReference type="EMBL" id="CP001177">
    <property type="protein sequence ID" value="ACJ77900.1"/>
    <property type="molecule type" value="Genomic_DNA"/>
</dbReference>
<dbReference type="SMR" id="B7HLG3"/>
<dbReference type="MEROPS" id="T01.007"/>
<dbReference type="KEGG" id="bcr:BCAH187_A3877"/>
<dbReference type="HOGENOM" id="CLU_093872_1_0_9"/>
<dbReference type="Proteomes" id="UP000002214">
    <property type="component" value="Chromosome"/>
</dbReference>
<dbReference type="GO" id="GO:0009376">
    <property type="term" value="C:HslUV protease complex"/>
    <property type="evidence" value="ECO:0007669"/>
    <property type="project" value="UniProtKB-UniRule"/>
</dbReference>
<dbReference type="GO" id="GO:0005839">
    <property type="term" value="C:proteasome core complex"/>
    <property type="evidence" value="ECO:0007669"/>
    <property type="project" value="InterPro"/>
</dbReference>
<dbReference type="GO" id="GO:0046872">
    <property type="term" value="F:metal ion binding"/>
    <property type="evidence" value="ECO:0007669"/>
    <property type="project" value="UniProtKB-KW"/>
</dbReference>
<dbReference type="GO" id="GO:0004298">
    <property type="term" value="F:threonine-type endopeptidase activity"/>
    <property type="evidence" value="ECO:0007669"/>
    <property type="project" value="UniProtKB-KW"/>
</dbReference>
<dbReference type="GO" id="GO:0051603">
    <property type="term" value="P:proteolysis involved in protein catabolic process"/>
    <property type="evidence" value="ECO:0007669"/>
    <property type="project" value="InterPro"/>
</dbReference>
<dbReference type="CDD" id="cd01913">
    <property type="entry name" value="protease_HslV"/>
    <property type="match status" value="1"/>
</dbReference>
<dbReference type="Gene3D" id="3.60.20.10">
    <property type="entry name" value="Glutamine Phosphoribosylpyrophosphate, subunit 1, domain 1"/>
    <property type="match status" value="1"/>
</dbReference>
<dbReference type="HAMAP" id="MF_00248">
    <property type="entry name" value="HslV"/>
    <property type="match status" value="1"/>
</dbReference>
<dbReference type="InterPro" id="IPR022281">
    <property type="entry name" value="ATP-dep_Prtase_HsIV_su"/>
</dbReference>
<dbReference type="InterPro" id="IPR029055">
    <property type="entry name" value="Ntn_hydrolases_N"/>
</dbReference>
<dbReference type="InterPro" id="IPR001353">
    <property type="entry name" value="Proteasome_sua/b"/>
</dbReference>
<dbReference type="InterPro" id="IPR023333">
    <property type="entry name" value="Proteasome_suB-type"/>
</dbReference>
<dbReference type="NCBIfam" id="TIGR03692">
    <property type="entry name" value="ATP_dep_HslV"/>
    <property type="match status" value="1"/>
</dbReference>
<dbReference type="NCBIfam" id="NF003964">
    <property type="entry name" value="PRK05456.1"/>
    <property type="match status" value="1"/>
</dbReference>
<dbReference type="PANTHER" id="PTHR32194:SF0">
    <property type="entry name" value="ATP-DEPENDENT PROTEASE SUBUNIT HSLV"/>
    <property type="match status" value="1"/>
</dbReference>
<dbReference type="PANTHER" id="PTHR32194">
    <property type="entry name" value="METALLOPROTEASE TLDD"/>
    <property type="match status" value="1"/>
</dbReference>
<dbReference type="Pfam" id="PF00227">
    <property type="entry name" value="Proteasome"/>
    <property type="match status" value="1"/>
</dbReference>
<dbReference type="PIRSF" id="PIRSF039093">
    <property type="entry name" value="HslV"/>
    <property type="match status" value="1"/>
</dbReference>
<dbReference type="SUPFAM" id="SSF56235">
    <property type="entry name" value="N-terminal nucleophile aminohydrolases (Ntn hydrolases)"/>
    <property type="match status" value="1"/>
</dbReference>
<dbReference type="PROSITE" id="PS51476">
    <property type="entry name" value="PROTEASOME_BETA_2"/>
    <property type="match status" value="1"/>
</dbReference>
<reference key="1">
    <citation type="submission" date="2008-10" db="EMBL/GenBank/DDBJ databases">
        <title>Genome sequence of Bacillus cereus AH187.</title>
        <authorList>
            <person name="Dodson R.J."/>
            <person name="Durkin A.S."/>
            <person name="Rosovitz M.J."/>
            <person name="Rasko D.A."/>
            <person name="Kolsto A.B."/>
            <person name="Okstad O.A."/>
            <person name="Ravel J."/>
            <person name="Sutton G."/>
        </authorList>
    </citation>
    <scope>NUCLEOTIDE SEQUENCE [LARGE SCALE GENOMIC DNA]</scope>
    <source>
        <strain>AH187</strain>
    </source>
</reference>
<accession>B7HLG3</accession>
<sequence>MGNFHATTIFAVHHNGECAMAGDGQVTMGNAVVMKHTARKVRKLFQGKVLAGFAGSVADAFTLFEMFEGKLEEYNGNLQRAAVEMAKQWRGDKMLRQLEAMLIVMDKTTMLLVSGTGEVIEPDDGILAIGSGGNYALSAGRALKQYASEHLTAKQIAKASLDIAGDICVYTNHNIIVEEL</sequence>
<feature type="chain" id="PRO_1000192670" description="ATP-dependent protease subunit HslV">
    <location>
        <begin position="1"/>
        <end position="180"/>
    </location>
</feature>
<feature type="active site" evidence="1">
    <location>
        <position position="7"/>
    </location>
</feature>
<feature type="binding site" evidence="1">
    <location>
        <position position="165"/>
    </location>
    <ligand>
        <name>Na(+)</name>
        <dbReference type="ChEBI" id="CHEBI:29101"/>
    </ligand>
</feature>
<feature type="binding site" evidence="1">
    <location>
        <position position="168"/>
    </location>
    <ligand>
        <name>Na(+)</name>
        <dbReference type="ChEBI" id="CHEBI:29101"/>
    </ligand>
</feature>
<feature type="binding site" evidence="1">
    <location>
        <position position="171"/>
    </location>
    <ligand>
        <name>Na(+)</name>
        <dbReference type="ChEBI" id="CHEBI:29101"/>
    </ligand>
</feature>
<proteinExistence type="inferred from homology"/>
<comment type="function">
    <text evidence="1">Protease subunit of a proteasome-like degradation complex believed to be a general protein degrading machinery.</text>
</comment>
<comment type="catalytic activity">
    <reaction evidence="1">
        <text>ATP-dependent cleavage of peptide bonds with broad specificity.</text>
        <dbReference type="EC" id="3.4.25.2"/>
    </reaction>
</comment>
<comment type="activity regulation">
    <text evidence="1">Allosterically activated by HslU binding.</text>
</comment>
<comment type="subunit">
    <text evidence="1">A double ring-shaped homohexamer of HslV is capped on each side by a ring-shaped HslU homohexamer. The assembly of the HslU/HslV complex is dependent on binding of ATP.</text>
</comment>
<comment type="subcellular location">
    <subcellularLocation>
        <location evidence="1">Cytoplasm</location>
    </subcellularLocation>
</comment>
<comment type="similarity">
    <text evidence="1">Belongs to the peptidase T1B family. HslV subfamily.</text>
</comment>